<proteinExistence type="inferred from homology"/>
<gene>
    <name evidence="1" type="primary">frr</name>
    <name type="ordered locus">RF_1127</name>
</gene>
<dbReference type="EMBL" id="CP000053">
    <property type="protein sequence ID" value="AAY61978.1"/>
    <property type="molecule type" value="Genomic_DNA"/>
</dbReference>
<dbReference type="SMR" id="Q4UKF3"/>
<dbReference type="STRING" id="315456.RF_1127"/>
<dbReference type="KEGG" id="rfe:RF_1127"/>
<dbReference type="eggNOG" id="COG0233">
    <property type="taxonomic scope" value="Bacteria"/>
</dbReference>
<dbReference type="HOGENOM" id="CLU_073981_2_1_5"/>
<dbReference type="OrthoDB" id="9804006at2"/>
<dbReference type="Proteomes" id="UP000008548">
    <property type="component" value="Chromosome"/>
</dbReference>
<dbReference type="GO" id="GO:0005829">
    <property type="term" value="C:cytosol"/>
    <property type="evidence" value="ECO:0007669"/>
    <property type="project" value="GOC"/>
</dbReference>
<dbReference type="GO" id="GO:0043023">
    <property type="term" value="F:ribosomal large subunit binding"/>
    <property type="evidence" value="ECO:0007669"/>
    <property type="project" value="TreeGrafter"/>
</dbReference>
<dbReference type="GO" id="GO:0002184">
    <property type="term" value="P:cytoplasmic translational termination"/>
    <property type="evidence" value="ECO:0007669"/>
    <property type="project" value="TreeGrafter"/>
</dbReference>
<dbReference type="CDD" id="cd00520">
    <property type="entry name" value="RRF"/>
    <property type="match status" value="1"/>
</dbReference>
<dbReference type="FunFam" id="1.10.132.20:FF:000001">
    <property type="entry name" value="Ribosome-recycling factor"/>
    <property type="match status" value="1"/>
</dbReference>
<dbReference type="FunFam" id="3.30.1360.40:FF:000001">
    <property type="entry name" value="Ribosome-recycling factor"/>
    <property type="match status" value="1"/>
</dbReference>
<dbReference type="Gene3D" id="3.30.1360.40">
    <property type="match status" value="1"/>
</dbReference>
<dbReference type="Gene3D" id="1.10.132.20">
    <property type="entry name" value="Ribosome-recycling factor"/>
    <property type="match status" value="1"/>
</dbReference>
<dbReference type="HAMAP" id="MF_00040">
    <property type="entry name" value="RRF"/>
    <property type="match status" value="1"/>
</dbReference>
<dbReference type="InterPro" id="IPR002661">
    <property type="entry name" value="Ribosome_recyc_fac"/>
</dbReference>
<dbReference type="InterPro" id="IPR023584">
    <property type="entry name" value="Ribosome_recyc_fac_dom"/>
</dbReference>
<dbReference type="InterPro" id="IPR036191">
    <property type="entry name" value="RRF_sf"/>
</dbReference>
<dbReference type="NCBIfam" id="TIGR00496">
    <property type="entry name" value="frr"/>
    <property type="match status" value="1"/>
</dbReference>
<dbReference type="PANTHER" id="PTHR20982:SF3">
    <property type="entry name" value="MITOCHONDRIAL RIBOSOME RECYCLING FACTOR PSEUDO 1"/>
    <property type="match status" value="1"/>
</dbReference>
<dbReference type="PANTHER" id="PTHR20982">
    <property type="entry name" value="RIBOSOME RECYCLING FACTOR"/>
    <property type="match status" value="1"/>
</dbReference>
<dbReference type="Pfam" id="PF01765">
    <property type="entry name" value="RRF"/>
    <property type="match status" value="1"/>
</dbReference>
<dbReference type="SUPFAM" id="SSF55194">
    <property type="entry name" value="Ribosome recycling factor, RRF"/>
    <property type="match status" value="1"/>
</dbReference>
<evidence type="ECO:0000255" key="1">
    <source>
        <dbReference type="HAMAP-Rule" id="MF_00040"/>
    </source>
</evidence>
<accession>Q4UKF3</accession>
<organism>
    <name type="scientific">Rickettsia felis (strain ATCC VR-1525 / URRWXCal2)</name>
    <name type="common">Rickettsia azadi</name>
    <dbReference type="NCBI Taxonomy" id="315456"/>
    <lineage>
        <taxon>Bacteria</taxon>
        <taxon>Pseudomonadati</taxon>
        <taxon>Pseudomonadota</taxon>
        <taxon>Alphaproteobacteria</taxon>
        <taxon>Rickettsiales</taxon>
        <taxon>Rickettsiaceae</taxon>
        <taxon>Rickettsieae</taxon>
        <taxon>Rickettsia</taxon>
        <taxon>spotted fever group</taxon>
    </lineage>
</organism>
<name>RRF_RICFE</name>
<protein>
    <recommendedName>
        <fullName evidence="1">Ribosome-recycling factor</fullName>
        <shortName evidence="1">RRF</shortName>
    </recommendedName>
    <alternativeName>
        <fullName evidence="1">Ribosome-releasing factor</fullName>
    </alternativeName>
</protein>
<keyword id="KW-0963">Cytoplasm</keyword>
<keyword id="KW-0648">Protein biosynthesis</keyword>
<sequence length="186" mass="20864">MDTETLKKNLQEKMDKALKVLDHELKGLRTGRASVNLLDSVTVEAYGSKMPLSQVASLSTPDARTINVQVWDKSMVSSVEKGITIANLGLTPATDGQLIRLPIPALTEERRKELVKLAHKYGEDTKISLRNIRRDGNEELKKLEKDNIIAKDEHHSLSEQVQKLTDDYSSKVDSAIKQKEQEIMTV</sequence>
<reference key="1">
    <citation type="journal article" date="2005" name="PLoS Biol.">
        <title>The genome sequence of Rickettsia felis identifies the first putative conjugative plasmid in an obligate intracellular parasite.</title>
        <authorList>
            <person name="Ogata H."/>
            <person name="Renesto P."/>
            <person name="Audic S."/>
            <person name="Robert C."/>
            <person name="Blanc G."/>
            <person name="Fournier P.-E."/>
            <person name="Parinello H."/>
            <person name="Claverie J.-M."/>
            <person name="Raoult D."/>
        </authorList>
    </citation>
    <scope>NUCLEOTIDE SEQUENCE [LARGE SCALE GENOMIC DNA]</scope>
    <source>
        <strain>ATCC VR-1525 / URRWXCal2</strain>
    </source>
</reference>
<feature type="chain" id="PRO_0000167528" description="Ribosome-recycling factor">
    <location>
        <begin position="1"/>
        <end position="186"/>
    </location>
</feature>
<comment type="function">
    <text evidence="1">Responsible for the release of ribosomes from messenger RNA at the termination of protein biosynthesis. May increase the efficiency of translation by recycling ribosomes from one round of translation to another.</text>
</comment>
<comment type="subcellular location">
    <subcellularLocation>
        <location evidence="1">Cytoplasm</location>
    </subcellularLocation>
</comment>
<comment type="similarity">
    <text evidence="1">Belongs to the RRF family.</text>
</comment>